<accession>Q2FTL0</accession>
<name>HEM1_METHJ</name>
<organism>
    <name type="scientific">Methanospirillum hungatei JF-1 (strain ATCC 27890 / DSM 864 / NBRC 100397 / JF-1)</name>
    <dbReference type="NCBI Taxonomy" id="323259"/>
    <lineage>
        <taxon>Archaea</taxon>
        <taxon>Methanobacteriati</taxon>
        <taxon>Methanobacteriota</taxon>
        <taxon>Stenosarchaea group</taxon>
        <taxon>Methanomicrobia</taxon>
        <taxon>Methanomicrobiales</taxon>
        <taxon>Methanospirillaceae</taxon>
        <taxon>Methanospirillum</taxon>
    </lineage>
</organism>
<gene>
    <name evidence="1" type="primary">hemA</name>
    <name type="ordered locus">Mhun_2562</name>
</gene>
<proteinExistence type="inferred from homology"/>
<dbReference type="EC" id="1.2.1.70" evidence="1"/>
<dbReference type="EMBL" id="CP000254">
    <property type="protein sequence ID" value="ABD42261.1"/>
    <property type="molecule type" value="Genomic_DNA"/>
</dbReference>
<dbReference type="RefSeq" id="WP_011449518.1">
    <property type="nucleotide sequence ID" value="NC_007796.1"/>
</dbReference>
<dbReference type="SMR" id="Q2FTL0"/>
<dbReference type="FunCoup" id="Q2FTL0">
    <property type="interactions" value="101"/>
</dbReference>
<dbReference type="STRING" id="323259.Mhun_2562"/>
<dbReference type="EnsemblBacteria" id="ABD42261">
    <property type="protein sequence ID" value="ABD42261"/>
    <property type="gene ID" value="Mhun_2562"/>
</dbReference>
<dbReference type="GeneID" id="3922819"/>
<dbReference type="KEGG" id="mhu:Mhun_2562"/>
<dbReference type="eggNOG" id="arCOG01036">
    <property type="taxonomic scope" value="Archaea"/>
</dbReference>
<dbReference type="HOGENOM" id="CLU_035113_2_2_2"/>
<dbReference type="InParanoid" id="Q2FTL0"/>
<dbReference type="OrthoDB" id="4562at2157"/>
<dbReference type="UniPathway" id="UPA00251">
    <property type="reaction ID" value="UER00316"/>
</dbReference>
<dbReference type="Proteomes" id="UP000001941">
    <property type="component" value="Chromosome"/>
</dbReference>
<dbReference type="GO" id="GO:0008883">
    <property type="term" value="F:glutamyl-tRNA reductase activity"/>
    <property type="evidence" value="ECO:0007669"/>
    <property type="project" value="UniProtKB-UniRule"/>
</dbReference>
<dbReference type="GO" id="GO:0050661">
    <property type="term" value="F:NADP binding"/>
    <property type="evidence" value="ECO:0007669"/>
    <property type="project" value="InterPro"/>
</dbReference>
<dbReference type="GO" id="GO:0019353">
    <property type="term" value="P:protoporphyrinogen IX biosynthetic process from glutamate"/>
    <property type="evidence" value="ECO:0007669"/>
    <property type="project" value="TreeGrafter"/>
</dbReference>
<dbReference type="CDD" id="cd05213">
    <property type="entry name" value="NAD_bind_Glutamyl_tRNA_reduct"/>
    <property type="match status" value="1"/>
</dbReference>
<dbReference type="FunFam" id="3.40.50.720:FF:000031">
    <property type="entry name" value="Glutamyl-tRNA reductase"/>
    <property type="match status" value="1"/>
</dbReference>
<dbReference type="Gene3D" id="3.30.460.30">
    <property type="entry name" value="Glutamyl-tRNA reductase, N-terminal domain"/>
    <property type="match status" value="1"/>
</dbReference>
<dbReference type="Gene3D" id="3.40.50.720">
    <property type="entry name" value="NAD(P)-binding Rossmann-like Domain"/>
    <property type="match status" value="1"/>
</dbReference>
<dbReference type="HAMAP" id="MF_00087">
    <property type="entry name" value="Glu_tRNA_reductase"/>
    <property type="match status" value="1"/>
</dbReference>
<dbReference type="InterPro" id="IPR000343">
    <property type="entry name" value="4pyrrol_synth_GluRdtase"/>
</dbReference>
<dbReference type="InterPro" id="IPR015896">
    <property type="entry name" value="4pyrrol_synth_GluRdtase_dimer"/>
</dbReference>
<dbReference type="InterPro" id="IPR015895">
    <property type="entry name" value="4pyrrol_synth_GluRdtase_N"/>
</dbReference>
<dbReference type="InterPro" id="IPR018214">
    <property type="entry name" value="GluRdtase_CS"/>
</dbReference>
<dbReference type="InterPro" id="IPR036453">
    <property type="entry name" value="GluRdtase_dimer_dom_sf"/>
</dbReference>
<dbReference type="InterPro" id="IPR036343">
    <property type="entry name" value="GluRdtase_N_sf"/>
</dbReference>
<dbReference type="InterPro" id="IPR036291">
    <property type="entry name" value="NAD(P)-bd_dom_sf"/>
</dbReference>
<dbReference type="InterPro" id="IPR006151">
    <property type="entry name" value="Shikm_DH/Glu-tRNA_Rdtase"/>
</dbReference>
<dbReference type="NCBIfam" id="TIGR01035">
    <property type="entry name" value="hemA"/>
    <property type="match status" value="1"/>
</dbReference>
<dbReference type="PANTHER" id="PTHR43013">
    <property type="entry name" value="GLUTAMYL-TRNA REDUCTASE"/>
    <property type="match status" value="1"/>
</dbReference>
<dbReference type="PANTHER" id="PTHR43013:SF1">
    <property type="entry name" value="GLUTAMYL-TRNA REDUCTASE"/>
    <property type="match status" value="1"/>
</dbReference>
<dbReference type="Pfam" id="PF00745">
    <property type="entry name" value="GlutR_dimer"/>
    <property type="match status" value="1"/>
</dbReference>
<dbReference type="Pfam" id="PF05201">
    <property type="entry name" value="GlutR_N"/>
    <property type="match status" value="1"/>
</dbReference>
<dbReference type="Pfam" id="PF01488">
    <property type="entry name" value="Shikimate_DH"/>
    <property type="match status" value="1"/>
</dbReference>
<dbReference type="PIRSF" id="PIRSF000445">
    <property type="entry name" value="4pyrrol_synth_GluRdtase"/>
    <property type="match status" value="1"/>
</dbReference>
<dbReference type="SUPFAM" id="SSF69742">
    <property type="entry name" value="Glutamyl tRNA-reductase catalytic, N-terminal domain"/>
    <property type="match status" value="1"/>
</dbReference>
<dbReference type="SUPFAM" id="SSF69075">
    <property type="entry name" value="Glutamyl tRNA-reductase dimerization domain"/>
    <property type="match status" value="1"/>
</dbReference>
<dbReference type="SUPFAM" id="SSF51735">
    <property type="entry name" value="NAD(P)-binding Rossmann-fold domains"/>
    <property type="match status" value="1"/>
</dbReference>
<dbReference type="PROSITE" id="PS00747">
    <property type="entry name" value="GLUTR"/>
    <property type="match status" value="1"/>
</dbReference>
<reference key="1">
    <citation type="journal article" date="2016" name="Stand. Genomic Sci.">
        <title>Complete genome sequence of Methanospirillum hungatei type strain JF1.</title>
        <authorList>
            <person name="Gunsalus R.P."/>
            <person name="Cook L.E."/>
            <person name="Crable B."/>
            <person name="Rohlin L."/>
            <person name="McDonald E."/>
            <person name="Mouttaki H."/>
            <person name="Sieber J.R."/>
            <person name="Poweleit N."/>
            <person name="Zhou H."/>
            <person name="Lapidus A.L."/>
            <person name="Daligault H.E."/>
            <person name="Land M."/>
            <person name="Gilna P."/>
            <person name="Ivanova N."/>
            <person name="Kyrpides N."/>
            <person name="Culley D.E."/>
            <person name="McInerney M.J."/>
        </authorList>
    </citation>
    <scope>NUCLEOTIDE SEQUENCE [LARGE SCALE GENOMIC DNA]</scope>
    <source>
        <strain>ATCC 27890 / DSM 864 / NBRC 100397 / JF-1</strain>
    </source>
</reference>
<comment type="function">
    <text evidence="1">Catalyzes the NADPH-dependent reduction of glutamyl-tRNA(Glu) to glutamate 1-semialdehyde (GSA).</text>
</comment>
<comment type="catalytic activity">
    <reaction evidence="1">
        <text>(S)-4-amino-5-oxopentanoate + tRNA(Glu) + NADP(+) = L-glutamyl-tRNA(Glu) + NADPH + H(+)</text>
        <dbReference type="Rhea" id="RHEA:12344"/>
        <dbReference type="Rhea" id="RHEA-COMP:9663"/>
        <dbReference type="Rhea" id="RHEA-COMP:9680"/>
        <dbReference type="ChEBI" id="CHEBI:15378"/>
        <dbReference type="ChEBI" id="CHEBI:57501"/>
        <dbReference type="ChEBI" id="CHEBI:57783"/>
        <dbReference type="ChEBI" id="CHEBI:58349"/>
        <dbReference type="ChEBI" id="CHEBI:78442"/>
        <dbReference type="ChEBI" id="CHEBI:78520"/>
        <dbReference type="EC" id="1.2.1.70"/>
    </reaction>
</comment>
<comment type="pathway">
    <text evidence="1">Porphyrin-containing compound metabolism; protoporphyrin-IX biosynthesis; 5-aminolevulinate from L-glutamyl-tRNA(Glu): step 1/2.</text>
</comment>
<comment type="subunit">
    <text evidence="1">Homodimer.</text>
</comment>
<comment type="domain">
    <text evidence="1">Possesses an unusual extended V-shaped dimeric structure with each monomer consisting of three distinct domains arranged along a curved 'spinal' alpha-helix. The N-terminal catalytic domain specifically recognizes the glutamate moiety of the substrate. The second domain is the NADPH-binding domain, and the third C-terminal domain is responsible for dimerization.</text>
</comment>
<comment type="miscellaneous">
    <text evidence="1">During catalysis, the active site Cys acts as a nucleophile attacking the alpha-carbonyl group of tRNA-bound glutamate with the formation of a thioester intermediate between enzyme and glutamate, and the concomitant release of tRNA(Glu). The thioester intermediate is finally reduced by direct hydride transfer from NADPH, to form the product GSA.</text>
</comment>
<comment type="similarity">
    <text evidence="1">Belongs to the glutamyl-tRNA reductase family.</text>
</comment>
<evidence type="ECO:0000255" key="1">
    <source>
        <dbReference type="HAMAP-Rule" id="MF_00087"/>
    </source>
</evidence>
<feature type="chain" id="PRO_0000335095" description="Glutamyl-tRNA reductase">
    <location>
        <begin position="1"/>
        <end position="424"/>
    </location>
</feature>
<feature type="active site" description="Nucleophile" evidence="1">
    <location>
        <position position="52"/>
    </location>
</feature>
<feature type="binding site" evidence="1">
    <location>
        <begin position="51"/>
        <end position="54"/>
    </location>
    <ligand>
        <name>substrate</name>
    </ligand>
</feature>
<feature type="binding site" evidence="1">
    <location>
        <position position="99"/>
    </location>
    <ligand>
        <name>substrate</name>
    </ligand>
</feature>
<feature type="binding site" evidence="1">
    <location>
        <begin position="104"/>
        <end position="106"/>
    </location>
    <ligand>
        <name>substrate</name>
    </ligand>
</feature>
<feature type="binding site" evidence="1">
    <location>
        <position position="110"/>
    </location>
    <ligand>
        <name>substrate</name>
    </ligand>
</feature>
<feature type="binding site" evidence="1">
    <location>
        <begin position="179"/>
        <end position="184"/>
    </location>
    <ligand>
        <name>NADP(+)</name>
        <dbReference type="ChEBI" id="CHEBI:58349"/>
    </ligand>
</feature>
<feature type="site" description="Important for activity" evidence="1">
    <location>
        <position position="89"/>
    </location>
</feature>
<protein>
    <recommendedName>
        <fullName evidence="1">Glutamyl-tRNA reductase</fullName>
        <shortName evidence="1">GluTR</shortName>
        <ecNumber evidence="1">1.2.1.70</ecNumber>
    </recommendedName>
</protein>
<sequence length="424" mass="46830">MTHALFSPFTIAGISHHTASVADMESVRFPDEEAFLTRAGDWFKGVILLQTCNRIEIMVHGNADLLGTFLESEGRAGWQMWKDADALSHLLDLAAGLDSMVIGEDQILGQLRKSLSLSESMSVADPLITLCINKAIHAGSEARRISGINRGAVSIGSAAVLLAEEQLGSLAGRHILVLGTGEMGVLVTQALAAKQLSAIYVANRTFDRAQCLAEKVHGTAVPMADLYRYLTMSDVIICCTAAPHPVIKVQEVMEALKGRSWPLDHSRRPLIIVDIAQPRDVEEDVGKIPGVCLYTIDDLRKVNDDTAQFRKEAAEKVREFLDQELVQFIRLFNRKAADELLATLHSWAEQIRIRERDRALSRLSGCDDRVRDVTDDLTRVLTRKLLTDVTLTIRTCAERGEMKIAEDLVGAITRGENICSRTYD</sequence>
<keyword id="KW-0521">NADP</keyword>
<keyword id="KW-0560">Oxidoreductase</keyword>
<keyword id="KW-0627">Porphyrin biosynthesis</keyword>
<keyword id="KW-1185">Reference proteome</keyword>